<feature type="chain" id="PRO_0000347366" description="Urease accessory protein UreG">
    <location>
        <begin position="1"/>
        <end position="215"/>
    </location>
</feature>
<feature type="binding site" evidence="1">
    <location>
        <begin position="24"/>
        <end position="31"/>
    </location>
    <ligand>
        <name>GTP</name>
        <dbReference type="ChEBI" id="CHEBI:37565"/>
    </ligand>
</feature>
<accession>B1YUF6</accession>
<evidence type="ECO:0000255" key="1">
    <source>
        <dbReference type="HAMAP-Rule" id="MF_01389"/>
    </source>
</evidence>
<dbReference type="EMBL" id="CP001025">
    <property type="protein sequence ID" value="ACB63283.1"/>
    <property type="molecule type" value="Genomic_DNA"/>
</dbReference>
<dbReference type="RefSeq" id="WP_012363247.1">
    <property type="nucleotide sequence ID" value="NC_010551.1"/>
</dbReference>
<dbReference type="SMR" id="B1YUF6"/>
<dbReference type="KEGG" id="bac:BamMC406_0787"/>
<dbReference type="HOGENOM" id="CLU_072144_1_0_4"/>
<dbReference type="OrthoDB" id="9802035at2"/>
<dbReference type="Proteomes" id="UP000001680">
    <property type="component" value="Chromosome 1"/>
</dbReference>
<dbReference type="GO" id="GO:0005737">
    <property type="term" value="C:cytoplasm"/>
    <property type="evidence" value="ECO:0007669"/>
    <property type="project" value="UniProtKB-SubCell"/>
</dbReference>
<dbReference type="GO" id="GO:0005525">
    <property type="term" value="F:GTP binding"/>
    <property type="evidence" value="ECO:0007669"/>
    <property type="project" value="UniProtKB-KW"/>
</dbReference>
<dbReference type="GO" id="GO:0003924">
    <property type="term" value="F:GTPase activity"/>
    <property type="evidence" value="ECO:0007669"/>
    <property type="project" value="InterPro"/>
</dbReference>
<dbReference type="GO" id="GO:0016151">
    <property type="term" value="F:nickel cation binding"/>
    <property type="evidence" value="ECO:0007669"/>
    <property type="project" value="UniProtKB-UniRule"/>
</dbReference>
<dbReference type="GO" id="GO:0043419">
    <property type="term" value="P:urea catabolic process"/>
    <property type="evidence" value="ECO:0007669"/>
    <property type="project" value="InterPro"/>
</dbReference>
<dbReference type="CDD" id="cd05540">
    <property type="entry name" value="UreG"/>
    <property type="match status" value="1"/>
</dbReference>
<dbReference type="FunFam" id="3.40.50.300:FF:000208">
    <property type="entry name" value="Urease accessory protein UreG"/>
    <property type="match status" value="1"/>
</dbReference>
<dbReference type="Gene3D" id="3.40.50.300">
    <property type="entry name" value="P-loop containing nucleotide triphosphate hydrolases"/>
    <property type="match status" value="1"/>
</dbReference>
<dbReference type="HAMAP" id="MF_01389">
    <property type="entry name" value="UreG"/>
    <property type="match status" value="1"/>
</dbReference>
<dbReference type="InterPro" id="IPR003495">
    <property type="entry name" value="CobW/HypB/UreG_nucleotide-bd"/>
</dbReference>
<dbReference type="InterPro" id="IPR027417">
    <property type="entry name" value="P-loop_NTPase"/>
</dbReference>
<dbReference type="InterPro" id="IPR004400">
    <property type="entry name" value="UreG"/>
</dbReference>
<dbReference type="NCBIfam" id="TIGR00101">
    <property type="entry name" value="ureG"/>
    <property type="match status" value="1"/>
</dbReference>
<dbReference type="PANTHER" id="PTHR31715">
    <property type="entry name" value="UREASE ACCESSORY PROTEIN G"/>
    <property type="match status" value="1"/>
</dbReference>
<dbReference type="PANTHER" id="PTHR31715:SF0">
    <property type="entry name" value="UREASE ACCESSORY PROTEIN G"/>
    <property type="match status" value="1"/>
</dbReference>
<dbReference type="Pfam" id="PF02492">
    <property type="entry name" value="cobW"/>
    <property type="match status" value="1"/>
</dbReference>
<dbReference type="PIRSF" id="PIRSF005624">
    <property type="entry name" value="Ni-bind_GTPase"/>
    <property type="match status" value="1"/>
</dbReference>
<dbReference type="SUPFAM" id="SSF52540">
    <property type="entry name" value="P-loop containing nucleoside triphosphate hydrolases"/>
    <property type="match status" value="1"/>
</dbReference>
<reference key="1">
    <citation type="submission" date="2008-04" db="EMBL/GenBank/DDBJ databases">
        <title>Complete sequence of chromosome 1 of Burkholderia ambifaria MC40-6.</title>
        <authorList>
            <person name="Copeland A."/>
            <person name="Lucas S."/>
            <person name="Lapidus A."/>
            <person name="Glavina del Rio T."/>
            <person name="Dalin E."/>
            <person name="Tice H."/>
            <person name="Pitluck S."/>
            <person name="Chain P."/>
            <person name="Malfatti S."/>
            <person name="Shin M."/>
            <person name="Vergez L."/>
            <person name="Lang D."/>
            <person name="Schmutz J."/>
            <person name="Larimer F."/>
            <person name="Land M."/>
            <person name="Hauser L."/>
            <person name="Kyrpides N."/>
            <person name="Lykidis A."/>
            <person name="Ramette A."/>
            <person name="Konstantinidis K."/>
            <person name="Tiedje J."/>
            <person name="Richardson P."/>
        </authorList>
    </citation>
    <scope>NUCLEOTIDE SEQUENCE [LARGE SCALE GENOMIC DNA]</scope>
    <source>
        <strain>MC40-6</strain>
    </source>
</reference>
<gene>
    <name evidence="1" type="primary">ureG</name>
    <name type="ordered locus">BamMC406_0787</name>
</gene>
<organism>
    <name type="scientific">Burkholderia ambifaria (strain MC40-6)</name>
    <dbReference type="NCBI Taxonomy" id="398577"/>
    <lineage>
        <taxon>Bacteria</taxon>
        <taxon>Pseudomonadati</taxon>
        <taxon>Pseudomonadota</taxon>
        <taxon>Betaproteobacteria</taxon>
        <taxon>Burkholderiales</taxon>
        <taxon>Burkholderiaceae</taxon>
        <taxon>Burkholderia</taxon>
        <taxon>Burkholderia cepacia complex</taxon>
    </lineage>
</organism>
<protein>
    <recommendedName>
        <fullName evidence="1">Urease accessory protein UreG</fullName>
    </recommendedName>
</protein>
<sequence length="215" mass="23079">MNAPALSPARRTKKLPPLRVGIGGPVGSGKTTLLEMLCKAMRERYDLVAITNDIYTKEDQRLLTVAGALPEERIMGVETGGCPHTAIREDASINLEAVDRMLSRFPDADIVFIESGGDNLAATFSPELSDLTIYVIDVAGGEKIPRKGGPGITKSDLLVINKTDLAPLVGANLDVMASDTKKMRGERPYVMTNLKALEGVADVVAFIEKKGLLMV</sequence>
<name>UREG_BURA4</name>
<comment type="function">
    <text evidence="1">Facilitates the functional incorporation of the urease nickel metallocenter. This process requires GTP hydrolysis, probably effectuated by UreG.</text>
</comment>
<comment type="subunit">
    <text evidence="1">Homodimer. UreD, UreF and UreG form a complex that acts as a GTP-hydrolysis-dependent molecular chaperone, activating the urease apoprotein by helping to assemble the nickel containing metallocenter of UreC. The UreE protein probably delivers the nickel.</text>
</comment>
<comment type="subcellular location">
    <subcellularLocation>
        <location evidence="1">Cytoplasm</location>
    </subcellularLocation>
</comment>
<comment type="similarity">
    <text evidence="1">Belongs to the SIMIBI class G3E GTPase family. UreG subfamily.</text>
</comment>
<keyword id="KW-0143">Chaperone</keyword>
<keyword id="KW-0963">Cytoplasm</keyword>
<keyword id="KW-0342">GTP-binding</keyword>
<keyword id="KW-0996">Nickel insertion</keyword>
<keyword id="KW-0547">Nucleotide-binding</keyword>
<proteinExistence type="inferred from homology"/>